<proteinExistence type="inferred from homology"/>
<dbReference type="EMBL" id="CP000444">
    <property type="protein sequence ID" value="ABI42334.1"/>
    <property type="molecule type" value="Genomic_DNA"/>
</dbReference>
<dbReference type="SMR" id="Q0HX21"/>
<dbReference type="KEGG" id="shm:Shewmr7_1335"/>
<dbReference type="HOGENOM" id="CLU_069313_0_2_6"/>
<dbReference type="GO" id="GO:0009427">
    <property type="term" value="C:bacterial-type flagellum basal body, distal rod, L ring"/>
    <property type="evidence" value="ECO:0007669"/>
    <property type="project" value="InterPro"/>
</dbReference>
<dbReference type="GO" id="GO:0009279">
    <property type="term" value="C:cell outer membrane"/>
    <property type="evidence" value="ECO:0007669"/>
    <property type="project" value="UniProtKB-SubCell"/>
</dbReference>
<dbReference type="GO" id="GO:0003774">
    <property type="term" value="F:cytoskeletal motor activity"/>
    <property type="evidence" value="ECO:0007669"/>
    <property type="project" value="InterPro"/>
</dbReference>
<dbReference type="GO" id="GO:0071973">
    <property type="term" value="P:bacterial-type flagellum-dependent cell motility"/>
    <property type="evidence" value="ECO:0007669"/>
    <property type="project" value="InterPro"/>
</dbReference>
<dbReference type="HAMAP" id="MF_00415">
    <property type="entry name" value="FlgH"/>
    <property type="match status" value="1"/>
</dbReference>
<dbReference type="InterPro" id="IPR000527">
    <property type="entry name" value="Flag_Lring"/>
</dbReference>
<dbReference type="NCBIfam" id="NF001304">
    <property type="entry name" value="PRK00249.1-4"/>
    <property type="match status" value="1"/>
</dbReference>
<dbReference type="NCBIfam" id="NF009338">
    <property type="entry name" value="PRK12698.1"/>
    <property type="match status" value="1"/>
</dbReference>
<dbReference type="PANTHER" id="PTHR34933">
    <property type="entry name" value="FLAGELLAR L-RING PROTEIN"/>
    <property type="match status" value="1"/>
</dbReference>
<dbReference type="PANTHER" id="PTHR34933:SF1">
    <property type="entry name" value="FLAGELLAR L-RING PROTEIN"/>
    <property type="match status" value="1"/>
</dbReference>
<dbReference type="Pfam" id="PF02107">
    <property type="entry name" value="FlgH"/>
    <property type="match status" value="1"/>
</dbReference>
<dbReference type="PRINTS" id="PR01008">
    <property type="entry name" value="FLGLRINGFLGH"/>
</dbReference>
<dbReference type="PROSITE" id="PS51257">
    <property type="entry name" value="PROKAR_LIPOPROTEIN"/>
    <property type="match status" value="1"/>
</dbReference>
<sequence>MARYFILAVALLLTACSSTSKKPIADDPFYAPVYPEAPPTKIAATGSIYQDSQAASLYSDIRAHKVGDIITIVLKEATQAKKSAGNQIKKGSDMSLDPIYAGGSNVSIGGVPLDLRYKDSMNTKRESDADQSNSLDGSISANVMQVLNNGNLVVRGEKWISINNGDEFIRVTGIVRSQDIKPDNTIDSTRMANARIQYSGTGTFADAQKVGWLSQFFMSDWWPF</sequence>
<reference key="1">
    <citation type="submission" date="2006-08" db="EMBL/GenBank/DDBJ databases">
        <title>Complete sequence of chromosome 1 of Shewanella sp. MR-7.</title>
        <authorList>
            <person name="Copeland A."/>
            <person name="Lucas S."/>
            <person name="Lapidus A."/>
            <person name="Barry K."/>
            <person name="Detter J.C."/>
            <person name="Glavina del Rio T."/>
            <person name="Hammon N."/>
            <person name="Israni S."/>
            <person name="Dalin E."/>
            <person name="Tice H."/>
            <person name="Pitluck S."/>
            <person name="Kiss H."/>
            <person name="Brettin T."/>
            <person name="Bruce D."/>
            <person name="Han C."/>
            <person name="Tapia R."/>
            <person name="Gilna P."/>
            <person name="Schmutz J."/>
            <person name="Larimer F."/>
            <person name="Land M."/>
            <person name="Hauser L."/>
            <person name="Kyrpides N."/>
            <person name="Mikhailova N."/>
            <person name="Nealson K."/>
            <person name="Konstantinidis K."/>
            <person name="Klappenbach J."/>
            <person name="Tiedje J."/>
            <person name="Richardson P."/>
        </authorList>
    </citation>
    <scope>NUCLEOTIDE SEQUENCE [LARGE SCALE GENOMIC DNA]</scope>
    <source>
        <strain>MR-7</strain>
    </source>
</reference>
<accession>Q0HX21</accession>
<name>FLGH_SHESR</name>
<feature type="signal peptide" evidence="1">
    <location>
        <begin position="1"/>
        <end position="15"/>
    </location>
</feature>
<feature type="chain" id="PRO_1000050102" description="Flagellar L-ring protein">
    <location>
        <begin position="16"/>
        <end position="224"/>
    </location>
</feature>
<feature type="lipid moiety-binding region" description="N-palmitoyl cysteine" evidence="1">
    <location>
        <position position="16"/>
    </location>
</feature>
<feature type="lipid moiety-binding region" description="S-diacylglycerol cysteine" evidence="1">
    <location>
        <position position="16"/>
    </location>
</feature>
<evidence type="ECO:0000255" key="1">
    <source>
        <dbReference type="HAMAP-Rule" id="MF_00415"/>
    </source>
</evidence>
<protein>
    <recommendedName>
        <fullName evidence="1">Flagellar L-ring protein</fullName>
    </recommendedName>
    <alternativeName>
        <fullName evidence="1">Basal body L-ring protein</fullName>
    </alternativeName>
</protein>
<comment type="function">
    <text evidence="1">Assembles around the rod to form the L-ring and probably protects the motor/basal body from shearing forces during rotation.</text>
</comment>
<comment type="subunit">
    <text evidence="1">The basal body constitutes a major portion of the flagellar organelle and consists of four rings (L,P,S, and M) mounted on a central rod.</text>
</comment>
<comment type="subcellular location">
    <subcellularLocation>
        <location evidence="1">Cell outer membrane</location>
        <topology evidence="1">Lipid-anchor</topology>
    </subcellularLocation>
    <subcellularLocation>
        <location evidence="1">Bacterial flagellum basal body</location>
    </subcellularLocation>
</comment>
<comment type="similarity">
    <text evidence="1">Belongs to the FlgH family.</text>
</comment>
<organism>
    <name type="scientific">Shewanella sp. (strain MR-7)</name>
    <dbReference type="NCBI Taxonomy" id="60481"/>
    <lineage>
        <taxon>Bacteria</taxon>
        <taxon>Pseudomonadati</taxon>
        <taxon>Pseudomonadota</taxon>
        <taxon>Gammaproteobacteria</taxon>
        <taxon>Alteromonadales</taxon>
        <taxon>Shewanellaceae</taxon>
        <taxon>Shewanella</taxon>
    </lineage>
</organism>
<keyword id="KW-0975">Bacterial flagellum</keyword>
<keyword id="KW-0998">Cell outer membrane</keyword>
<keyword id="KW-0449">Lipoprotein</keyword>
<keyword id="KW-0472">Membrane</keyword>
<keyword id="KW-0564">Palmitate</keyword>
<keyword id="KW-0732">Signal</keyword>
<gene>
    <name evidence="1" type="primary">flgH</name>
    <name type="ordered locus">Shewmr7_1335</name>
</gene>